<sequence length="310" mass="31924">MIQIARTWRVFAGGMATGFIGVVLVTAGKASADPLLPPPPIPAPVSAPATVPPVQNLTALPGGSSNRFSPAPAPAPIASPIPVGAPGSTAVPPLPPPVTPAISGTLRDHLREKGVKLEAQRPHGFKALDITLPMPPRWTQVPDPNVPDAFVVIADRLGNSVYTSNAQLVVYRLIGDFDPAEAITHGYIDSQKLLAWQTTNASMANFDGFPSSIIEGTYRENDMTLNTSRRHVIATSGADKYLVSLSVTTALSQAVTDGPATDAIVNGFQVVAHAAPAQAPAPAPGSAPVGLPGQAPGYPPAGTLTPVPPR</sequence>
<name>PR28_MYCTU</name>
<comment type="similarity">
    <text evidence="3">To M.leprae ML0031.</text>
</comment>
<organism>
    <name type="scientific">Mycobacterium tuberculosis (strain ATCC 25618 / H37Rv)</name>
    <dbReference type="NCBI Taxonomy" id="83332"/>
    <lineage>
        <taxon>Bacteria</taxon>
        <taxon>Bacillati</taxon>
        <taxon>Actinomycetota</taxon>
        <taxon>Actinomycetes</taxon>
        <taxon>Mycobacteriales</taxon>
        <taxon>Mycobacteriaceae</taxon>
        <taxon>Mycobacterium</taxon>
        <taxon>Mycobacterium tuberculosis complex</taxon>
    </lineage>
</organism>
<accession>P9WIM9</accession>
<accession>L0T5C1</accession>
<accession>P0A5Q6</accession>
<accession>P71697</accession>
<keyword id="KW-0002">3D-structure</keyword>
<keyword id="KW-1185">Reference proteome</keyword>
<keyword id="KW-0732">Signal</keyword>
<feature type="signal peptide" evidence="1">
    <location>
        <begin position="1"/>
        <end position="32"/>
    </location>
</feature>
<feature type="chain" id="PRO_0000022094" description="Proline-rich 28 kDa antigen">
    <location>
        <begin position="33"/>
        <end position="310"/>
    </location>
</feature>
<feature type="region of interest" description="Disordered" evidence="2">
    <location>
        <begin position="278"/>
        <end position="310"/>
    </location>
</feature>
<feature type="helix" evidence="4">
    <location>
        <begin position="106"/>
        <end position="112"/>
    </location>
</feature>
<feature type="strand" evidence="4">
    <location>
        <begin position="116"/>
        <end position="119"/>
    </location>
</feature>
<feature type="strand" evidence="4">
    <location>
        <begin position="129"/>
        <end position="131"/>
    </location>
</feature>
<feature type="strand" evidence="4">
    <location>
        <begin position="149"/>
        <end position="154"/>
    </location>
</feature>
<feature type="strand" evidence="4">
    <location>
        <begin position="159"/>
        <end position="162"/>
    </location>
</feature>
<feature type="strand" evidence="4">
    <location>
        <begin position="165"/>
        <end position="175"/>
    </location>
</feature>
<feature type="helix" evidence="4">
    <location>
        <begin position="179"/>
        <end position="182"/>
    </location>
</feature>
<feature type="helix" evidence="4">
    <location>
        <begin position="183"/>
        <end position="185"/>
    </location>
</feature>
<feature type="helix" evidence="4">
    <location>
        <begin position="188"/>
        <end position="191"/>
    </location>
</feature>
<feature type="strand" evidence="4">
    <location>
        <begin position="197"/>
        <end position="202"/>
    </location>
</feature>
<feature type="strand" evidence="4">
    <location>
        <begin position="211"/>
        <end position="220"/>
    </location>
</feature>
<feature type="strand" evidence="4">
    <location>
        <begin position="223"/>
        <end position="236"/>
    </location>
</feature>
<feature type="strand" evidence="4">
    <location>
        <begin position="239"/>
        <end position="250"/>
    </location>
</feature>
<feature type="helix" evidence="4">
    <location>
        <begin position="251"/>
        <end position="253"/>
    </location>
</feature>
<feature type="turn" evidence="4">
    <location>
        <begin position="254"/>
        <end position="257"/>
    </location>
</feature>
<feature type="helix" evidence="4">
    <location>
        <begin position="258"/>
        <end position="267"/>
    </location>
</feature>
<feature type="strand" evidence="4">
    <location>
        <begin position="269"/>
        <end position="271"/>
    </location>
</feature>
<evidence type="ECO:0000255" key="1"/>
<evidence type="ECO:0000256" key="2">
    <source>
        <dbReference type="SAM" id="MobiDB-lite"/>
    </source>
</evidence>
<evidence type="ECO:0000305" key="3"/>
<evidence type="ECO:0007829" key="4">
    <source>
        <dbReference type="PDB" id="4PWS"/>
    </source>
</evidence>
<protein>
    <recommendedName>
        <fullName>Proline-rich 28 kDa antigen</fullName>
    </recommendedName>
</protein>
<proteinExistence type="evidence at protein level"/>
<gene>
    <name type="primary">mtc28</name>
    <name type="ordered locus">Rv0040c</name>
    <name type="ORF">MTCY21D4.03c</name>
</gene>
<reference key="1">
    <citation type="journal article" date="1997" name="Infect. Immun.">
        <title>MTC28, a novel 28-kilodalton proline-rich secreted antigen specific for the Mycobacterium tuberculosis complex.</title>
        <authorList>
            <person name="Manca C."/>
            <person name="Lyashchenko K."/>
            <person name="Colangeli R."/>
            <person name="Gennaro M.L."/>
        </authorList>
    </citation>
    <scope>NUCLEOTIDE SEQUENCE [GENOMIC DNA]</scope>
    <source>
        <strain>ATCC 25618 / H37Rv</strain>
    </source>
</reference>
<reference key="2">
    <citation type="journal article" date="1998" name="Nature">
        <title>Deciphering the biology of Mycobacterium tuberculosis from the complete genome sequence.</title>
        <authorList>
            <person name="Cole S.T."/>
            <person name="Brosch R."/>
            <person name="Parkhill J."/>
            <person name="Garnier T."/>
            <person name="Churcher C.M."/>
            <person name="Harris D.E."/>
            <person name="Gordon S.V."/>
            <person name="Eiglmeier K."/>
            <person name="Gas S."/>
            <person name="Barry C.E. III"/>
            <person name="Tekaia F."/>
            <person name="Badcock K."/>
            <person name="Basham D."/>
            <person name="Brown D."/>
            <person name="Chillingworth T."/>
            <person name="Connor R."/>
            <person name="Davies R.M."/>
            <person name="Devlin K."/>
            <person name="Feltwell T."/>
            <person name="Gentles S."/>
            <person name="Hamlin N."/>
            <person name="Holroyd S."/>
            <person name="Hornsby T."/>
            <person name="Jagels K."/>
            <person name="Krogh A."/>
            <person name="McLean J."/>
            <person name="Moule S."/>
            <person name="Murphy L.D."/>
            <person name="Oliver S."/>
            <person name="Osborne J."/>
            <person name="Quail M.A."/>
            <person name="Rajandream M.A."/>
            <person name="Rogers J."/>
            <person name="Rutter S."/>
            <person name="Seeger K."/>
            <person name="Skelton S."/>
            <person name="Squares S."/>
            <person name="Squares R."/>
            <person name="Sulston J.E."/>
            <person name="Taylor K."/>
            <person name="Whitehead S."/>
            <person name="Barrell B.G."/>
        </authorList>
    </citation>
    <scope>NUCLEOTIDE SEQUENCE [LARGE SCALE GENOMIC DNA]</scope>
    <source>
        <strain>ATCC 25618 / H37Rv</strain>
    </source>
</reference>
<reference key="3">
    <citation type="journal article" date="2002" name="Microbiology">
        <title>Re-annotation of the genome sequence of Mycobacterium tuberculosis H37Rv.</title>
        <authorList>
            <person name="Camus J.-C."/>
            <person name="Pryor M.J."/>
            <person name="Medigue C."/>
            <person name="Cole S.T."/>
        </authorList>
    </citation>
    <scope>SEQUENCE REVISION</scope>
</reference>
<reference key="4">
    <citation type="journal article" date="2011" name="Mol. Cell. Proteomics">
        <title>Proteogenomic analysis of Mycobacterium tuberculosis by high resolution mass spectrometry.</title>
        <authorList>
            <person name="Kelkar D.S."/>
            <person name="Kumar D."/>
            <person name="Kumar P."/>
            <person name="Balakrishnan L."/>
            <person name="Muthusamy B."/>
            <person name="Yadav A.K."/>
            <person name="Shrivastava P."/>
            <person name="Marimuthu A."/>
            <person name="Anand S."/>
            <person name="Sundaram H."/>
            <person name="Kingsbury R."/>
            <person name="Harsha H.C."/>
            <person name="Nair B."/>
            <person name="Prasad T.S."/>
            <person name="Chauhan D.S."/>
            <person name="Katoch K."/>
            <person name="Katoch V.M."/>
            <person name="Kumar P."/>
            <person name="Chaerkady R."/>
            <person name="Ramachandran S."/>
            <person name="Dash D."/>
            <person name="Pandey A."/>
        </authorList>
    </citation>
    <scope>IDENTIFICATION BY MASS SPECTROMETRY [LARGE SCALE ANALYSIS]</scope>
    <source>
        <strain>ATCC 25618 / H37Rv</strain>
    </source>
</reference>
<dbReference type="EMBL" id="U75271">
    <property type="protein sequence ID" value="AAB97625.1"/>
    <property type="molecule type" value="Genomic_DNA"/>
</dbReference>
<dbReference type="EMBL" id="AL123456">
    <property type="protein sequence ID" value="CCP42762.1"/>
    <property type="molecule type" value="Genomic_DNA"/>
</dbReference>
<dbReference type="PIR" id="H70911">
    <property type="entry name" value="H70911"/>
</dbReference>
<dbReference type="RefSeq" id="NP_214554.2">
    <property type="nucleotide sequence ID" value="NC_000962.3"/>
</dbReference>
<dbReference type="RefSeq" id="WP_003900793.1">
    <property type="nucleotide sequence ID" value="NZ_NVQJ01000005.1"/>
</dbReference>
<dbReference type="PDB" id="4OL4">
    <property type="method" value="X-ray"/>
    <property type="resolution" value="2.80 A"/>
    <property type="chains" value="A=32-310"/>
</dbReference>
<dbReference type="PDB" id="4PWS">
    <property type="method" value="X-ray"/>
    <property type="resolution" value="2.15 A"/>
    <property type="chains" value="A=32-310"/>
</dbReference>
<dbReference type="PDBsum" id="4OL4"/>
<dbReference type="PDBsum" id="4PWS"/>
<dbReference type="SMR" id="P9WIM9"/>
<dbReference type="STRING" id="83332.Rv0040c"/>
<dbReference type="PaxDb" id="83332-Rv0040c"/>
<dbReference type="GeneID" id="887037"/>
<dbReference type="KEGG" id="mtu:Rv0040c"/>
<dbReference type="KEGG" id="mtv:RVBD_0040c"/>
<dbReference type="TubercuList" id="Rv0040c"/>
<dbReference type="eggNOG" id="ENOG5031EJ8">
    <property type="taxonomic scope" value="Bacteria"/>
</dbReference>
<dbReference type="InParanoid" id="P9WIM9"/>
<dbReference type="OrthoDB" id="4752473at2"/>
<dbReference type="EvolutionaryTrace" id="P9WIM9"/>
<dbReference type="Proteomes" id="UP000001584">
    <property type="component" value="Chromosome"/>
</dbReference>
<dbReference type="GO" id="GO:0005576">
    <property type="term" value="C:extracellular region"/>
    <property type="evidence" value="ECO:0007005"/>
    <property type="project" value="MTBBASE"/>
</dbReference>
<dbReference type="Gene3D" id="3.40.1000.10">
    <property type="entry name" value="Mog1/PsbP, alpha/beta/alpha sandwich"/>
    <property type="match status" value="1"/>
</dbReference>
<dbReference type="InterPro" id="IPR019674">
    <property type="entry name" value="Lipoprotein_LpqN/LpqT-like"/>
</dbReference>
<dbReference type="Pfam" id="PF10738">
    <property type="entry name" value="Lpp-LpqN"/>
    <property type="match status" value="1"/>
</dbReference>